<name>METK_BORBU</name>
<proteinExistence type="inferred from homology"/>
<evidence type="ECO:0000255" key="1">
    <source>
        <dbReference type="HAMAP-Rule" id="MF_00086"/>
    </source>
</evidence>
<keyword id="KW-0067">ATP-binding</keyword>
<keyword id="KW-0963">Cytoplasm</keyword>
<keyword id="KW-0460">Magnesium</keyword>
<keyword id="KW-0479">Metal-binding</keyword>
<keyword id="KW-0547">Nucleotide-binding</keyword>
<keyword id="KW-0554">One-carbon metabolism</keyword>
<keyword id="KW-0630">Potassium</keyword>
<keyword id="KW-1185">Reference proteome</keyword>
<keyword id="KW-0808">Transferase</keyword>
<reference key="1">
    <citation type="journal article" date="1997" name="Nature">
        <title>Genomic sequence of a Lyme disease spirochaete, Borrelia burgdorferi.</title>
        <authorList>
            <person name="Fraser C.M."/>
            <person name="Casjens S."/>
            <person name="Huang W.M."/>
            <person name="Sutton G.G."/>
            <person name="Clayton R.A."/>
            <person name="Lathigra R."/>
            <person name="White O."/>
            <person name="Ketchum K.A."/>
            <person name="Dodson R.J."/>
            <person name="Hickey E.K."/>
            <person name="Gwinn M.L."/>
            <person name="Dougherty B.A."/>
            <person name="Tomb J.-F."/>
            <person name="Fleischmann R.D."/>
            <person name="Richardson D.L."/>
            <person name="Peterson J.D."/>
            <person name="Kerlavage A.R."/>
            <person name="Quackenbush J."/>
            <person name="Salzberg S.L."/>
            <person name="Hanson M."/>
            <person name="van Vugt R."/>
            <person name="Palmer N."/>
            <person name="Adams M.D."/>
            <person name="Gocayne J.D."/>
            <person name="Weidman J.F."/>
            <person name="Utterback T.R."/>
            <person name="Watthey L."/>
            <person name="McDonald L.A."/>
            <person name="Artiach P."/>
            <person name="Bowman C."/>
            <person name="Garland S.A."/>
            <person name="Fujii C."/>
            <person name="Cotton M.D."/>
            <person name="Horst K."/>
            <person name="Roberts K.M."/>
            <person name="Hatch B."/>
            <person name="Smith H.O."/>
            <person name="Venter J.C."/>
        </authorList>
    </citation>
    <scope>NUCLEOTIDE SEQUENCE [LARGE SCALE GENOMIC DNA]</scope>
    <source>
        <strain>ATCC 35210 / DSM 4680 / CIP 102532 / B31</strain>
    </source>
</reference>
<protein>
    <recommendedName>
        <fullName evidence="1">S-adenosylmethionine synthase</fullName>
        <shortName evidence="1">AdoMet synthase</shortName>
        <ecNumber evidence="1">2.5.1.6</ecNumber>
    </recommendedName>
    <alternativeName>
        <fullName evidence="1">MAT</fullName>
    </alternativeName>
    <alternativeName>
        <fullName evidence="1">Methionine adenosyltransferase</fullName>
    </alternativeName>
</protein>
<organism>
    <name type="scientific">Borreliella burgdorferi (strain ATCC 35210 / DSM 4680 / CIP 102532 / B31)</name>
    <name type="common">Borrelia burgdorferi</name>
    <dbReference type="NCBI Taxonomy" id="224326"/>
    <lineage>
        <taxon>Bacteria</taxon>
        <taxon>Pseudomonadati</taxon>
        <taxon>Spirochaetota</taxon>
        <taxon>Spirochaetia</taxon>
        <taxon>Spirochaetales</taxon>
        <taxon>Borreliaceae</taxon>
        <taxon>Borreliella</taxon>
    </lineage>
</organism>
<sequence length="392" mass="43070">MNKIIAANQTLTSEAVSEGHPDKIADQISDAILDEILKEDKNAKVACEVIIAQNLVVIAGEINSPVKKNIDIKEVAKNIIKDIGYTNIDYGLDYKTITVIDAIGNQSRDIINAIEKKGSNALGAGDQGIIFGYACDETKNFLPAPYELANSILKKASNLRKSGAIKWLRPDSKSQVTIEYDKNRNPVKIKNIIVSHQHHPNISQKLIQQTIIEEIIKPTVQDKSMLDENTAYCINPSGNFVIGGPTGDTGLTGRKIIADSYGGFARHGGGAYSGKDATKVDRSAAYMARYIAKNMVAAGISKEFELQLAYAIGIENPISIQITGGINDPKYANKILNFIVNNFDLTPNGIIEKLKLKQPIYLKTCTYGHFGKNEFEWEKLDFVKKIQTALKK</sequence>
<comment type="function">
    <text evidence="1">Catalyzes the formation of S-adenosylmethionine (AdoMet) from methionine and ATP. The overall synthetic reaction is composed of two sequential steps, AdoMet formation and the subsequent tripolyphosphate hydrolysis which occurs prior to release of AdoMet from the enzyme.</text>
</comment>
<comment type="catalytic activity">
    <reaction evidence="1">
        <text>L-methionine + ATP + H2O = S-adenosyl-L-methionine + phosphate + diphosphate</text>
        <dbReference type="Rhea" id="RHEA:21080"/>
        <dbReference type="ChEBI" id="CHEBI:15377"/>
        <dbReference type="ChEBI" id="CHEBI:30616"/>
        <dbReference type="ChEBI" id="CHEBI:33019"/>
        <dbReference type="ChEBI" id="CHEBI:43474"/>
        <dbReference type="ChEBI" id="CHEBI:57844"/>
        <dbReference type="ChEBI" id="CHEBI:59789"/>
        <dbReference type="EC" id="2.5.1.6"/>
    </reaction>
</comment>
<comment type="cofactor">
    <cofactor evidence="1">
        <name>Mg(2+)</name>
        <dbReference type="ChEBI" id="CHEBI:18420"/>
    </cofactor>
    <text evidence="1">Binds 2 divalent ions per subunit.</text>
</comment>
<comment type="cofactor">
    <cofactor evidence="1">
        <name>K(+)</name>
        <dbReference type="ChEBI" id="CHEBI:29103"/>
    </cofactor>
    <text evidence="1">Binds 1 potassium ion per subunit.</text>
</comment>
<comment type="pathway">
    <text evidence="1">Amino-acid biosynthesis; S-adenosyl-L-methionine biosynthesis; S-adenosyl-L-methionine from L-methionine: step 1/1.</text>
</comment>
<comment type="subunit">
    <text evidence="1">Homotetramer; dimer of dimers.</text>
</comment>
<comment type="subcellular location">
    <subcellularLocation>
        <location evidence="1">Cytoplasm</location>
    </subcellularLocation>
</comment>
<comment type="similarity">
    <text evidence="1">Belongs to the AdoMet synthase family.</text>
</comment>
<gene>
    <name evidence="1" type="primary">metK</name>
    <name type="ordered locus">BB_0376</name>
</gene>
<dbReference type="EC" id="2.5.1.6" evidence="1"/>
<dbReference type="EMBL" id="AE000783">
    <property type="protein sequence ID" value="AAC66763.1"/>
    <property type="molecule type" value="Genomic_DNA"/>
</dbReference>
<dbReference type="PIR" id="G70146">
    <property type="entry name" value="G70146"/>
</dbReference>
<dbReference type="RefSeq" id="NP_212510.1">
    <property type="nucleotide sequence ID" value="NC_001318.1"/>
</dbReference>
<dbReference type="RefSeq" id="WP_002663127.1">
    <property type="nucleotide sequence ID" value="NC_001318.1"/>
</dbReference>
<dbReference type="SMR" id="O50163"/>
<dbReference type="STRING" id="224326.BB_0376"/>
<dbReference type="PaxDb" id="224326-BB_0376"/>
<dbReference type="EnsemblBacteria" id="AAC66763">
    <property type="protein sequence ID" value="AAC66763"/>
    <property type="gene ID" value="BB_0376"/>
</dbReference>
<dbReference type="KEGG" id="bbu:BB_0376"/>
<dbReference type="PATRIC" id="fig|224326.49.peg.771"/>
<dbReference type="HOGENOM" id="CLU_041802_1_1_12"/>
<dbReference type="OrthoDB" id="9801686at2"/>
<dbReference type="UniPathway" id="UPA00315">
    <property type="reaction ID" value="UER00080"/>
</dbReference>
<dbReference type="Proteomes" id="UP000001807">
    <property type="component" value="Chromosome"/>
</dbReference>
<dbReference type="GO" id="GO:0005737">
    <property type="term" value="C:cytoplasm"/>
    <property type="evidence" value="ECO:0007669"/>
    <property type="project" value="UniProtKB-SubCell"/>
</dbReference>
<dbReference type="GO" id="GO:0005524">
    <property type="term" value="F:ATP binding"/>
    <property type="evidence" value="ECO:0007669"/>
    <property type="project" value="UniProtKB-UniRule"/>
</dbReference>
<dbReference type="GO" id="GO:0000287">
    <property type="term" value="F:magnesium ion binding"/>
    <property type="evidence" value="ECO:0007669"/>
    <property type="project" value="UniProtKB-UniRule"/>
</dbReference>
<dbReference type="GO" id="GO:0004478">
    <property type="term" value="F:methionine adenosyltransferase activity"/>
    <property type="evidence" value="ECO:0007669"/>
    <property type="project" value="UniProtKB-UniRule"/>
</dbReference>
<dbReference type="GO" id="GO:0006730">
    <property type="term" value="P:one-carbon metabolic process"/>
    <property type="evidence" value="ECO:0007669"/>
    <property type="project" value="UniProtKB-KW"/>
</dbReference>
<dbReference type="GO" id="GO:0006556">
    <property type="term" value="P:S-adenosylmethionine biosynthetic process"/>
    <property type="evidence" value="ECO:0007669"/>
    <property type="project" value="UniProtKB-UniRule"/>
</dbReference>
<dbReference type="CDD" id="cd18079">
    <property type="entry name" value="S-AdoMet_synt"/>
    <property type="match status" value="1"/>
</dbReference>
<dbReference type="FunFam" id="3.30.300.10:FF:000003">
    <property type="entry name" value="S-adenosylmethionine synthase"/>
    <property type="match status" value="1"/>
</dbReference>
<dbReference type="Gene3D" id="3.30.300.10">
    <property type="match status" value="3"/>
</dbReference>
<dbReference type="HAMAP" id="MF_00086">
    <property type="entry name" value="S_AdoMet_synth1"/>
    <property type="match status" value="1"/>
</dbReference>
<dbReference type="InterPro" id="IPR022631">
    <property type="entry name" value="ADOMET_SYNTHASE_CS"/>
</dbReference>
<dbReference type="InterPro" id="IPR022630">
    <property type="entry name" value="S-AdoMet_synt_C"/>
</dbReference>
<dbReference type="InterPro" id="IPR022629">
    <property type="entry name" value="S-AdoMet_synt_central"/>
</dbReference>
<dbReference type="InterPro" id="IPR022628">
    <property type="entry name" value="S-AdoMet_synt_N"/>
</dbReference>
<dbReference type="InterPro" id="IPR002133">
    <property type="entry name" value="S-AdoMet_synthetase"/>
</dbReference>
<dbReference type="InterPro" id="IPR022636">
    <property type="entry name" value="S-AdoMet_synthetase_sfam"/>
</dbReference>
<dbReference type="NCBIfam" id="TIGR01034">
    <property type="entry name" value="metK"/>
    <property type="match status" value="1"/>
</dbReference>
<dbReference type="PANTHER" id="PTHR11964">
    <property type="entry name" value="S-ADENOSYLMETHIONINE SYNTHETASE"/>
    <property type="match status" value="1"/>
</dbReference>
<dbReference type="Pfam" id="PF02773">
    <property type="entry name" value="S-AdoMet_synt_C"/>
    <property type="match status" value="1"/>
</dbReference>
<dbReference type="Pfam" id="PF02772">
    <property type="entry name" value="S-AdoMet_synt_M"/>
    <property type="match status" value="1"/>
</dbReference>
<dbReference type="Pfam" id="PF00438">
    <property type="entry name" value="S-AdoMet_synt_N"/>
    <property type="match status" value="1"/>
</dbReference>
<dbReference type="PIRSF" id="PIRSF000497">
    <property type="entry name" value="MAT"/>
    <property type="match status" value="1"/>
</dbReference>
<dbReference type="SUPFAM" id="SSF55973">
    <property type="entry name" value="S-adenosylmethionine synthetase"/>
    <property type="match status" value="3"/>
</dbReference>
<dbReference type="PROSITE" id="PS00376">
    <property type="entry name" value="ADOMET_SYNTHASE_1"/>
    <property type="match status" value="1"/>
</dbReference>
<dbReference type="PROSITE" id="PS00377">
    <property type="entry name" value="ADOMET_SYNTHASE_2"/>
    <property type="match status" value="1"/>
</dbReference>
<feature type="chain" id="PRO_0000174497" description="S-adenosylmethionine synthase">
    <location>
        <begin position="1"/>
        <end position="392"/>
    </location>
</feature>
<feature type="region of interest" description="Flexible loop" evidence="1">
    <location>
        <begin position="106"/>
        <end position="116"/>
    </location>
</feature>
<feature type="binding site" description="in other chain" evidence="1">
    <location>
        <position position="20"/>
    </location>
    <ligand>
        <name>ATP</name>
        <dbReference type="ChEBI" id="CHEBI:30616"/>
        <note>ligand shared between two neighboring subunits</note>
    </ligand>
</feature>
<feature type="binding site" evidence="1">
    <location>
        <position position="22"/>
    </location>
    <ligand>
        <name>Mg(2+)</name>
        <dbReference type="ChEBI" id="CHEBI:18420"/>
    </ligand>
</feature>
<feature type="binding site" evidence="1">
    <location>
        <position position="48"/>
    </location>
    <ligand>
        <name>K(+)</name>
        <dbReference type="ChEBI" id="CHEBI:29103"/>
    </ligand>
</feature>
<feature type="binding site" description="in other chain" evidence="1">
    <location>
        <position position="61"/>
    </location>
    <ligand>
        <name>L-methionine</name>
        <dbReference type="ChEBI" id="CHEBI:57844"/>
        <note>ligand shared between two neighboring subunits</note>
    </ligand>
</feature>
<feature type="binding site" description="in other chain" evidence="1">
    <location>
        <position position="106"/>
    </location>
    <ligand>
        <name>L-methionine</name>
        <dbReference type="ChEBI" id="CHEBI:57844"/>
        <note>ligand shared between two neighboring subunits</note>
    </ligand>
</feature>
<feature type="binding site" description="in other chain" evidence="1">
    <location>
        <begin position="171"/>
        <end position="173"/>
    </location>
    <ligand>
        <name>ATP</name>
        <dbReference type="ChEBI" id="CHEBI:30616"/>
        <note>ligand shared between two neighboring subunits</note>
    </ligand>
</feature>
<feature type="binding site" evidence="1">
    <location>
        <position position="248"/>
    </location>
    <ligand>
        <name>ATP</name>
        <dbReference type="ChEBI" id="CHEBI:30616"/>
        <note>ligand shared between two neighboring subunits</note>
    </ligand>
</feature>
<feature type="binding site" evidence="1">
    <location>
        <position position="248"/>
    </location>
    <ligand>
        <name>L-methionine</name>
        <dbReference type="ChEBI" id="CHEBI:57844"/>
        <note>ligand shared between two neighboring subunits</note>
    </ligand>
</feature>
<feature type="binding site" description="in other chain" evidence="1">
    <location>
        <begin position="254"/>
        <end position="255"/>
    </location>
    <ligand>
        <name>ATP</name>
        <dbReference type="ChEBI" id="CHEBI:30616"/>
        <note>ligand shared between two neighboring subunits</note>
    </ligand>
</feature>
<feature type="binding site" evidence="1">
    <location>
        <position position="271"/>
    </location>
    <ligand>
        <name>ATP</name>
        <dbReference type="ChEBI" id="CHEBI:30616"/>
        <note>ligand shared between two neighboring subunits</note>
    </ligand>
</feature>
<feature type="binding site" evidence="1">
    <location>
        <position position="275"/>
    </location>
    <ligand>
        <name>ATP</name>
        <dbReference type="ChEBI" id="CHEBI:30616"/>
        <note>ligand shared between two neighboring subunits</note>
    </ligand>
</feature>
<feature type="binding site" description="in other chain" evidence="1">
    <location>
        <position position="279"/>
    </location>
    <ligand>
        <name>L-methionine</name>
        <dbReference type="ChEBI" id="CHEBI:57844"/>
        <note>ligand shared between two neighboring subunits</note>
    </ligand>
</feature>
<accession>O50163</accession>